<gene>
    <name type="primary">PRMT5</name>
    <name type="synonym">SKB1</name>
</gene>
<protein>
    <recommendedName>
        <fullName>Protein arginine N-methyltransferase 5</fullName>
        <shortName>PRMT5</shortName>
        <ecNumber evidence="2">2.1.1.320</ecNumber>
    </recommendedName>
    <alternativeName>
        <fullName>Histone-arginine N-methyltransferase PRMT5</fullName>
    </alternativeName>
    <alternativeName>
        <fullName>Shk1 kinase-binding protein 1 homolog</fullName>
        <shortName>SKB1 homolog</shortName>
    </alternativeName>
</protein>
<dbReference type="EC" id="2.1.1.320" evidence="2"/>
<dbReference type="EMBL" id="BC134449">
    <property type="protein sequence ID" value="AAI34450.1"/>
    <property type="molecule type" value="mRNA"/>
</dbReference>
<dbReference type="RefSeq" id="NP_001098844.1">
    <property type="nucleotide sequence ID" value="NM_001105374.1"/>
</dbReference>
<dbReference type="SMR" id="A7YW45"/>
<dbReference type="FunCoup" id="A7YW45">
    <property type="interactions" value="3684"/>
</dbReference>
<dbReference type="STRING" id="9913.ENSBTAP00000014463"/>
<dbReference type="PaxDb" id="9913-ENSBTAP00000014463"/>
<dbReference type="GeneID" id="515594"/>
<dbReference type="KEGG" id="bta:515594"/>
<dbReference type="CTD" id="10419"/>
<dbReference type="eggNOG" id="KOG0822">
    <property type="taxonomic scope" value="Eukaryota"/>
</dbReference>
<dbReference type="InParanoid" id="A7YW45"/>
<dbReference type="OrthoDB" id="1368803at2759"/>
<dbReference type="Proteomes" id="UP000009136">
    <property type="component" value="Unplaced"/>
</dbReference>
<dbReference type="GO" id="GO:0005829">
    <property type="term" value="C:cytosol"/>
    <property type="evidence" value="ECO:0000250"/>
    <property type="project" value="UniProtKB"/>
</dbReference>
<dbReference type="GO" id="GO:0005794">
    <property type="term" value="C:Golgi apparatus"/>
    <property type="evidence" value="ECO:0000250"/>
    <property type="project" value="UniProtKB"/>
</dbReference>
<dbReference type="GO" id="GO:0034709">
    <property type="term" value="C:methylosome"/>
    <property type="evidence" value="ECO:0000250"/>
    <property type="project" value="UniProtKB"/>
</dbReference>
<dbReference type="GO" id="GO:0005634">
    <property type="term" value="C:nucleus"/>
    <property type="evidence" value="ECO:0000250"/>
    <property type="project" value="UniProtKB"/>
</dbReference>
<dbReference type="GO" id="GO:0070888">
    <property type="term" value="F:E-box binding"/>
    <property type="evidence" value="ECO:0000250"/>
    <property type="project" value="UniProtKB"/>
</dbReference>
<dbReference type="GO" id="GO:0008469">
    <property type="term" value="F:histone arginine N-methyltransferase activity"/>
    <property type="evidence" value="ECO:0000318"/>
    <property type="project" value="GO_Central"/>
</dbReference>
<dbReference type="GO" id="GO:0044020">
    <property type="term" value="F:histone H4R3 methyltransferase activity"/>
    <property type="evidence" value="ECO:0000250"/>
    <property type="project" value="UniProtKB"/>
</dbReference>
<dbReference type="GO" id="GO:0008327">
    <property type="term" value="F:methyl-CpG binding"/>
    <property type="evidence" value="ECO:0000250"/>
    <property type="project" value="UniProtKB"/>
</dbReference>
<dbReference type="GO" id="GO:0016274">
    <property type="term" value="F:protein-arginine N-methyltransferase activity"/>
    <property type="evidence" value="ECO:0000250"/>
    <property type="project" value="UniProtKB"/>
</dbReference>
<dbReference type="GO" id="GO:0035243">
    <property type="term" value="F:protein-arginine omega-N symmetric methyltransferase activity"/>
    <property type="evidence" value="ECO:0000250"/>
    <property type="project" value="UniProtKB"/>
</dbReference>
<dbReference type="GO" id="GO:0003714">
    <property type="term" value="F:transcription corepressor activity"/>
    <property type="evidence" value="ECO:0000250"/>
    <property type="project" value="UniProtKB"/>
</dbReference>
<dbReference type="GO" id="GO:0032922">
    <property type="term" value="P:circadian regulation of gene expression"/>
    <property type="evidence" value="ECO:0000250"/>
    <property type="project" value="UniProtKB"/>
</dbReference>
<dbReference type="GO" id="GO:0006353">
    <property type="term" value="P:DNA-templated transcription termination"/>
    <property type="evidence" value="ECO:0000250"/>
    <property type="project" value="UniProtKB"/>
</dbReference>
<dbReference type="GO" id="GO:0042118">
    <property type="term" value="P:endothelial cell activation"/>
    <property type="evidence" value="ECO:0000250"/>
    <property type="project" value="UniProtKB"/>
</dbReference>
<dbReference type="GO" id="GO:0090161">
    <property type="term" value="P:Golgi ribbon formation"/>
    <property type="evidence" value="ECO:0000250"/>
    <property type="project" value="UniProtKB"/>
</dbReference>
<dbReference type="GO" id="GO:0018216">
    <property type="term" value="P:peptidyl-arginine methylation"/>
    <property type="evidence" value="ECO:0000250"/>
    <property type="project" value="UniProtKB"/>
</dbReference>
<dbReference type="GO" id="GO:0006355">
    <property type="term" value="P:regulation of DNA-templated transcription"/>
    <property type="evidence" value="ECO:0000318"/>
    <property type="project" value="GO_Central"/>
</dbReference>
<dbReference type="GO" id="GO:0000387">
    <property type="term" value="P:spliceosomal snRNP assembly"/>
    <property type="evidence" value="ECO:0000250"/>
    <property type="project" value="UniProtKB"/>
</dbReference>
<dbReference type="CDD" id="cd02440">
    <property type="entry name" value="AdoMet_MTases"/>
    <property type="match status" value="1"/>
</dbReference>
<dbReference type="FunFam" id="2.70.160.11:FF:000003">
    <property type="entry name" value="Protein arginine N-methyltransferase 5"/>
    <property type="match status" value="1"/>
</dbReference>
<dbReference type="FunFam" id="3.20.20.150:FF:000008">
    <property type="entry name" value="Protein arginine N-methyltransferase 5"/>
    <property type="match status" value="1"/>
</dbReference>
<dbReference type="FunFam" id="3.40.50.150:FF:000029">
    <property type="entry name" value="Protein arginine N-methyltransferase 5"/>
    <property type="match status" value="1"/>
</dbReference>
<dbReference type="Gene3D" id="3.20.20.150">
    <property type="entry name" value="Divalent-metal-dependent TIM barrel enzymes"/>
    <property type="match status" value="1"/>
</dbReference>
<dbReference type="Gene3D" id="2.70.160.11">
    <property type="entry name" value="Hnrnp arginine n-methyltransferase1"/>
    <property type="match status" value="1"/>
</dbReference>
<dbReference type="Gene3D" id="3.40.50.150">
    <property type="entry name" value="Vaccinia Virus protein VP39"/>
    <property type="match status" value="1"/>
</dbReference>
<dbReference type="InterPro" id="IPR025799">
    <property type="entry name" value="Arg_MeTrfase"/>
</dbReference>
<dbReference type="InterPro" id="IPR007857">
    <property type="entry name" value="Arg_MeTrfase_PRMT5"/>
</dbReference>
<dbReference type="InterPro" id="IPR035075">
    <property type="entry name" value="PRMT5"/>
</dbReference>
<dbReference type="InterPro" id="IPR035248">
    <property type="entry name" value="PRMT5_C"/>
</dbReference>
<dbReference type="InterPro" id="IPR035247">
    <property type="entry name" value="PRMT5_TIM"/>
</dbReference>
<dbReference type="InterPro" id="IPR029063">
    <property type="entry name" value="SAM-dependent_MTases_sf"/>
</dbReference>
<dbReference type="PANTHER" id="PTHR10738">
    <property type="entry name" value="PROTEIN ARGININE N-METHYLTRANSFERASE 5"/>
    <property type="match status" value="1"/>
</dbReference>
<dbReference type="PANTHER" id="PTHR10738:SF0">
    <property type="entry name" value="PROTEIN ARGININE N-METHYLTRANSFERASE 5"/>
    <property type="match status" value="1"/>
</dbReference>
<dbReference type="Pfam" id="PF05185">
    <property type="entry name" value="PRMT5"/>
    <property type="match status" value="1"/>
</dbReference>
<dbReference type="Pfam" id="PF17286">
    <property type="entry name" value="PRMT5_C"/>
    <property type="match status" value="1"/>
</dbReference>
<dbReference type="Pfam" id="PF17285">
    <property type="entry name" value="PRMT5_TIM"/>
    <property type="match status" value="1"/>
</dbReference>
<dbReference type="PIRSF" id="PIRSF015894">
    <property type="entry name" value="Skb1_MeTrfase"/>
    <property type="match status" value="1"/>
</dbReference>
<dbReference type="SUPFAM" id="SSF53335">
    <property type="entry name" value="S-adenosyl-L-methionine-dependent methyltransferases"/>
    <property type="match status" value="1"/>
</dbReference>
<dbReference type="PROSITE" id="PS51678">
    <property type="entry name" value="SAM_MT_PRMT"/>
    <property type="match status" value="1"/>
</dbReference>
<proteinExistence type="evidence at transcript level"/>
<accession>A7YW45</accession>
<comment type="function">
    <text evidence="2 4">Arginine methyltransferase that can both catalyze the formation of omega-N monomethylarginine (MMA) and symmetrical dimethylarginine (sDMA), with a preference for the formation of MMA. Specifically mediates the symmetrical dimethylation of arginine residues in the small nuclear ribonucleoproteins Sm D1 (SNRPD1) and Sm D3 (SNRPD3); such methylation being required for the assembly and biogenesis of snRNP core particles. Methylates SUPT5H and may regulate its transcriptional elongation properties (By similarity). May methylate the N-terminal region of MBD2 (By similarity). Mono- and dimethylates arginine residues of myelin basic protein (MBP) in vitro. May play a role in cytokine-activated transduction pathways. Negatively regulates cyclin E1 promoter activity and cellular proliferation. Methylates histone H2A and H4 'Arg-3' during germ cell development (By similarity). Methylates histone H3 'Arg-8', which may repress transcription (By similarity). Methylates the Piwi proteins (PIWIL1, PIWIL2 and PIWIL4), methylation of Piwi proteins being required for the interaction with Tudor domain-containing proteins and subsequent localization to the meiotic nuage (By similarity). Methylates RPS10. Attenuates EGF signaling through the MAPK1/MAPK3 pathway acting at 2 levels. First, monomethylates EGFR; this enhances EGFR 'Tyr-1197' phosphorylation and PTPN6 recruitment, eventually leading to reduced SOS1 phosphorylation. Second, methylates RAF1 and probably BRAF, hence destabilizing these 2 signaling proteins and reducing their catalytic activity. Required for induction of E-selectin and VCAM-1, on the endothelial cells surface at sites of inflammation. Methylates HOXA9. Methylates and regulates SRGAP2 which is involved in cell migration and differentiation (By similarity). Acts as a transcriptional corepressor in CRY1-mediated repression of the core circadian component PER1 by regulating the H4R3 dimethylation at the PER1 promoter (By similarity). Methylates GM130/GOLGA2, regulating Golgi ribbon formation. Methylates H4R3 in genes involved in glioblastomagenesis in a CHTOP- and/or TET1-dependent manner. Symmetrically methylates POLR2A, a modification that allows the recruitment to POLR2A of proteins including SMN1/SMN2 and SETX. This is required for resolving RNA-DNA hybrids created by RNA polymerase II, that form R-loop in transcription terminal regions, an important step in proper transcription termination. Along with LYAR, binds the promoter of gamma-globin HBG1/HBG2 and represses its expression. Symmetrically methylates NCL. Methylates p53/TP53; methylation might possibly affect p53/TP53 target gene specificity (By similarity). Involved in spliceosome maturation and mRNA splicing in prophase I spermatocytes through the catalysis of the symmetrical arginine dimethylation of SNRPB (small nuclear ribonucleoprotein-associated protein) and the interaction with tudor domain-containing protein TDRD6 (By similarity).</text>
</comment>
<comment type="catalytic activity">
    <reaction evidence="2">
        <text>L-arginyl-[protein] + 2 S-adenosyl-L-methionine = N(omega),N(omega)'-dimethyl-L-arginyl-[protein] + 2 S-adenosyl-L-homocysteine + 2 H(+)</text>
        <dbReference type="Rhea" id="RHEA:48108"/>
        <dbReference type="Rhea" id="RHEA-COMP:10532"/>
        <dbReference type="Rhea" id="RHEA-COMP:11992"/>
        <dbReference type="ChEBI" id="CHEBI:15378"/>
        <dbReference type="ChEBI" id="CHEBI:29965"/>
        <dbReference type="ChEBI" id="CHEBI:57856"/>
        <dbReference type="ChEBI" id="CHEBI:59789"/>
        <dbReference type="ChEBI" id="CHEBI:88221"/>
        <dbReference type="EC" id="2.1.1.320"/>
    </reaction>
</comment>
<comment type="activity regulation">
    <text evidence="1">Activity is increased by EGF, HGF, FGF1 or FGF2 treatments, and slightly decreased by NGF treatment.</text>
</comment>
<comment type="subunit">
    <text evidence="2 4">Forms, at least, homodimers and homotetramers. Component of the methylosome complex, composed of PRMT5, WDR77 and CLNS1A. Found in a complex composed of PRMT5, WDR77 and RIOK1. RIOK1 and CLNS1A associate with PRMT5 in a mutually exclusive fashion, which allows the recruitment of distinct methylation substrates, such as nucleolin/NCL and Sm proteins, respectively (By similarity). Interacts with PRDM1 (By similarity). Identified in a complex composed of methylosome and PRMT1 and ERH. Interacts with EGFR; methylates EGFR and stimulates EGFR-mediated ERK activation. Interacts with HOXA9. Interacts with SRGAP2. Found in a complex with COPRS, RUNX1 and CBFB. Interacts with CHTOP; the interaction symmetrically methylates CHTOP, but seems to require the presence of PRMT1. Interacts with EPB41L3; this modulates methylation of target proteins. Component of a high molecular weight E2F-pocket protein complex, CERC (cyclin E1 repressor complex). Associates with SWI/SNF remodeling complexes containing SMARCA2 and SMARCA4. Interacts with JAK2, SSTR1, SUPT5H, BRAF and with active RAF1. Interacts with LSM11, PRMT7 and SNRPD3. Interacts with COPRS; promoting its recruitment on histone H4. Interacts with CLNS1A/pICln. Identified in a complex with CLNS1A/pICln and Sm proteins. Interacts with RPS10. Interacts with WDR77. Interacts with IWS1. Interacts with CRY1. Interacts with POLR2A. Interacts with SMN1/SMN2. Interacts with LYAR; this interaction is direct. Interacts with TTC5/STRAP; this interaction is DNA damage-dependent and promotes PRMT5 interaction with p53/TP53. Interacts with p53/TP53 in response to DNA damage; the interaction is TTC5/STRAP dependent. Interacts with FAM47E; the interaction is direct, promotes PRMT5 localization to chromatin, and does not disrupt its association with WDR77 or STUB1 (By similarity). Interacts with TDRD6 (By similarity). Interacts with STUB1 (By similarity). Interacts with MBD2 (By similarity). Does not interact with MBD3 (By similarity).</text>
</comment>
<comment type="subcellular location">
    <subcellularLocation>
        <location evidence="2">Cytoplasm</location>
    </subcellularLocation>
    <subcellularLocation>
        <location evidence="2">Nucleus</location>
    </subcellularLocation>
    <subcellularLocation>
        <location evidence="2">Golgi apparatus</location>
    </subcellularLocation>
    <text evidence="2">Localizes to promoter regions of target genes on chromosomes (By similarity). Localizes to methylated chromatin (By similarity).</text>
</comment>
<comment type="similarity">
    <text evidence="5">Belongs to the class I-like SAM-binding methyltransferase superfamily. Protein arginine N-methyltransferase family.</text>
</comment>
<name>ANM5_BOVIN</name>
<evidence type="ECO:0000250" key="1"/>
<evidence type="ECO:0000250" key="2">
    <source>
        <dbReference type="UniProtKB" id="O14744"/>
    </source>
</evidence>
<evidence type="ECO:0000250" key="3">
    <source>
        <dbReference type="UniProtKB" id="P46580"/>
    </source>
</evidence>
<evidence type="ECO:0000250" key="4">
    <source>
        <dbReference type="UniProtKB" id="Q8CIG8"/>
    </source>
</evidence>
<evidence type="ECO:0000255" key="5">
    <source>
        <dbReference type="PROSITE-ProRule" id="PRU01015"/>
    </source>
</evidence>
<keyword id="KW-0007">Acetylation</keyword>
<keyword id="KW-0090">Biological rhythms</keyword>
<keyword id="KW-0156">Chromatin regulator</keyword>
<keyword id="KW-0963">Cytoplasm</keyword>
<keyword id="KW-0333">Golgi apparatus</keyword>
<keyword id="KW-0489">Methyltransferase</keyword>
<keyword id="KW-0539">Nucleus</keyword>
<keyword id="KW-1185">Reference proteome</keyword>
<keyword id="KW-0678">Repressor</keyword>
<keyword id="KW-0949">S-adenosyl-L-methionine</keyword>
<keyword id="KW-0804">Transcription</keyword>
<keyword id="KW-0805">Transcription regulation</keyword>
<keyword id="KW-0808">Transferase</keyword>
<reference key="1">
    <citation type="submission" date="2007-03" db="EMBL/GenBank/DDBJ databases">
        <authorList>
            <consortium name="NIH - Mammalian Gene Collection (MGC) project"/>
        </authorList>
    </citation>
    <scope>NUCLEOTIDE SEQUENCE [LARGE SCALE MRNA]</scope>
    <source>
        <strain>Hereford</strain>
        <tissue>Hypothalamus</tissue>
    </source>
</reference>
<organism>
    <name type="scientific">Bos taurus</name>
    <name type="common">Bovine</name>
    <dbReference type="NCBI Taxonomy" id="9913"/>
    <lineage>
        <taxon>Eukaryota</taxon>
        <taxon>Metazoa</taxon>
        <taxon>Chordata</taxon>
        <taxon>Craniata</taxon>
        <taxon>Vertebrata</taxon>
        <taxon>Euteleostomi</taxon>
        <taxon>Mammalia</taxon>
        <taxon>Eutheria</taxon>
        <taxon>Laurasiatheria</taxon>
        <taxon>Artiodactyla</taxon>
        <taxon>Ruminantia</taxon>
        <taxon>Pecora</taxon>
        <taxon>Bovidae</taxon>
        <taxon>Bovinae</taxon>
        <taxon>Bos</taxon>
    </lineage>
</organism>
<feature type="initiator methionine" description="Removed" evidence="2">
    <location>
        <position position="1"/>
    </location>
</feature>
<feature type="chain" id="PRO_0000330891" description="Protein arginine N-methyltransferase 5">
    <location>
        <begin position="2"/>
        <end position="637"/>
    </location>
</feature>
<feature type="domain" description="SAM-dependent MTase PRMT-type" evidence="5">
    <location>
        <begin position="308"/>
        <end position="615"/>
    </location>
</feature>
<feature type="region of interest" description="TIM barrel" evidence="2">
    <location>
        <begin position="13"/>
        <end position="292"/>
    </location>
</feature>
<feature type="region of interest" description="Beta barrel" evidence="2">
    <location>
        <begin position="465"/>
        <end position="637"/>
    </location>
</feature>
<feature type="region of interest" description="Dimerization" evidence="2">
    <location>
        <begin position="488"/>
        <end position="494"/>
    </location>
</feature>
<feature type="active site" description="Proton donor/acceptor" evidence="2">
    <location>
        <position position="435"/>
    </location>
</feature>
<feature type="active site" description="Proton donor/acceptor" evidence="2">
    <location>
        <position position="444"/>
    </location>
</feature>
<feature type="binding site" evidence="2">
    <location>
        <position position="324"/>
    </location>
    <ligand>
        <name>S-adenosyl-L-methionine</name>
        <dbReference type="ChEBI" id="CHEBI:59789"/>
    </ligand>
</feature>
<feature type="binding site" evidence="2">
    <location>
        <position position="327"/>
    </location>
    <ligand>
        <name>a protein</name>
        <dbReference type="ChEBI" id="CHEBI:16541"/>
        <note>substrate</note>
    </ligand>
    <ligandPart>
        <name>L-arginine residue</name>
        <dbReference type="ChEBI" id="CHEBI:29965"/>
    </ligandPart>
</feature>
<feature type="binding site" evidence="2">
    <location>
        <begin position="333"/>
        <end position="334"/>
    </location>
    <ligand>
        <name>S-adenosyl-L-methionine</name>
        <dbReference type="ChEBI" id="CHEBI:59789"/>
    </ligand>
</feature>
<feature type="binding site" evidence="2">
    <location>
        <position position="392"/>
    </location>
    <ligand>
        <name>S-adenosyl-L-methionine</name>
        <dbReference type="ChEBI" id="CHEBI:59789"/>
    </ligand>
</feature>
<feature type="binding site" evidence="2">
    <location>
        <begin position="419"/>
        <end position="420"/>
    </location>
    <ligand>
        <name>S-adenosyl-L-methionine</name>
        <dbReference type="ChEBI" id="CHEBI:59789"/>
    </ligand>
</feature>
<feature type="binding site" evidence="2">
    <location>
        <position position="435"/>
    </location>
    <ligand>
        <name>a protein</name>
        <dbReference type="ChEBI" id="CHEBI:16541"/>
        <note>substrate</note>
    </ligand>
    <ligandPart>
        <name>L-arginine residue</name>
        <dbReference type="ChEBI" id="CHEBI:29965"/>
    </ligandPart>
</feature>
<feature type="binding site" evidence="2">
    <location>
        <position position="444"/>
    </location>
    <ligand>
        <name>a protein</name>
        <dbReference type="ChEBI" id="CHEBI:16541"/>
        <note>substrate</note>
    </ligand>
    <ligandPart>
        <name>L-arginine residue</name>
        <dbReference type="ChEBI" id="CHEBI:29965"/>
    </ligandPart>
</feature>
<feature type="site" description="Critical for specifying symmetric addition of methyl groups" evidence="3">
    <location>
        <position position="327"/>
    </location>
</feature>
<feature type="modified residue" description="N-acetylalanine" evidence="2">
    <location>
        <position position="2"/>
    </location>
</feature>
<sequence>MAAMAVGGAGGSRVSSGRDLNCVPEIADTLGAVAKQGFDFLCMPVFHPRFKREFTQEPAKSRPGPQTRSDLLLSGRDWNTLIVGKLSPWIRPDSKVEKIRRNSEAAMLQELNFGAYLGLPAFLLPLNQEDNTNLARVLTNHIHTGHHSSMFWMRVPLVAPEDLRDDIIENAPTSHTEEYSGEEKTWMWWHNFRTLCDYSKRIAVALEIGADLPSNHVIDRWLGEPIKAAILPTSIFLTNKKGFPVLSKMHQRLIFRLLKLEVQFIITGTNHHSEKEFCSYLQYLEYLSQNRPPPNAYELFAKGYEDYLQSPLQPLMDNLESQTYEVFEKDPIKYSQYQQAIYKCLLDRVPEEEKDTNIQVLMVLGAGRGPLVNASLRAAKQADRRIKLYAVEKNPNAVVTLENWQFEEWGSQVTVVSSDMREWVAPEKADIIVSELLGSFADNELSPESLDGAQHFLKDDGVSIPGEYTSFLAPISSSKLYNEVRACREKDRDPEAQFEMPYVVRLHNFHQLSAPQPCFTFSHPNRDPMIDNNRYCTLEFPVEVNTVLHGFAGYFETVLYQDITLSIRPETHSPGMFSWFPILFPIKQPITVREGQTICVRFWRCSNSKKVWYEWAVTAPVCSAIHNPTGRSYTIGL</sequence>